<organism>
    <name type="scientific">Phocaeicola vulgatus (strain ATCC 8482 / DSM 1447 / JCM 5826 / CCUG 4940 / NBRC 14291 / NCTC 11154)</name>
    <name type="common">Bacteroides vulgatus</name>
    <dbReference type="NCBI Taxonomy" id="435590"/>
    <lineage>
        <taxon>Bacteria</taxon>
        <taxon>Pseudomonadati</taxon>
        <taxon>Bacteroidota</taxon>
        <taxon>Bacteroidia</taxon>
        <taxon>Bacteroidales</taxon>
        <taxon>Bacteroidaceae</taxon>
        <taxon>Phocaeicola</taxon>
    </lineage>
</organism>
<comment type="function">
    <text evidence="1">Catalyzes the specific phosphorylation of the 3-hydroxyl group of shikimic acid using ATP as a cosubstrate.</text>
</comment>
<comment type="catalytic activity">
    <reaction evidence="1">
        <text>shikimate + ATP = 3-phosphoshikimate + ADP + H(+)</text>
        <dbReference type="Rhea" id="RHEA:13121"/>
        <dbReference type="ChEBI" id="CHEBI:15378"/>
        <dbReference type="ChEBI" id="CHEBI:30616"/>
        <dbReference type="ChEBI" id="CHEBI:36208"/>
        <dbReference type="ChEBI" id="CHEBI:145989"/>
        <dbReference type="ChEBI" id="CHEBI:456216"/>
        <dbReference type="EC" id="2.7.1.71"/>
    </reaction>
</comment>
<comment type="cofactor">
    <cofactor evidence="1">
        <name>Mg(2+)</name>
        <dbReference type="ChEBI" id="CHEBI:18420"/>
    </cofactor>
    <text evidence="1">Binds 1 Mg(2+) ion per subunit.</text>
</comment>
<comment type="pathway">
    <text evidence="1">Metabolic intermediate biosynthesis; chorismate biosynthesis; chorismate from D-erythrose 4-phosphate and phosphoenolpyruvate: step 5/7.</text>
</comment>
<comment type="subunit">
    <text evidence="1">Monomer.</text>
</comment>
<comment type="subcellular location">
    <subcellularLocation>
        <location evidence="1">Cytoplasm</location>
    </subcellularLocation>
</comment>
<comment type="similarity">
    <text evidence="1">Belongs to the shikimate kinase family.</text>
</comment>
<gene>
    <name evidence="1" type="primary">aroK</name>
    <name type="ordered locus">BVU_1336</name>
</gene>
<protein>
    <recommendedName>
        <fullName evidence="1">Shikimate kinase</fullName>
        <shortName evidence="1">SK</shortName>
        <ecNumber evidence="1">2.7.1.71</ecNumber>
    </recommendedName>
</protein>
<feature type="chain" id="PRO_1000094374" description="Shikimate kinase">
    <location>
        <begin position="1"/>
        <end position="175"/>
    </location>
</feature>
<feature type="binding site" evidence="1">
    <location>
        <begin position="11"/>
        <end position="16"/>
    </location>
    <ligand>
        <name>ATP</name>
        <dbReference type="ChEBI" id="CHEBI:30616"/>
    </ligand>
</feature>
<feature type="binding site" evidence="1">
    <location>
        <position position="15"/>
    </location>
    <ligand>
        <name>Mg(2+)</name>
        <dbReference type="ChEBI" id="CHEBI:18420"/>
    </ligand>
</feature>
<feature type="binding site" evidence="1">
    <location>
        <position position="33"/>
    </location>
    <ligand>
        <name>substrate</name>
    </ligand>
</feature>
<feature type="binding site" evidence="1">
    <location>
        <position position="57"/>
    </location>
    <ligand>
        <name>substrate</name>
    </ligand>
</feature>
<feature type="binding site" evidence="1">
    <location>
        <position position="79"/>
    </location>
    <ligand>
        <name>substrate</name>
    </ligand>
</feature>
<feature type="binding site" evidence="1">
    <location>
        <position position="118"/>
    </location>
    <ligand>
        <name>ATP</name>
        <dbReference type="ChEBI" id="CHEBI:30616"/>
    </ligand>
</feature>
<feature type="binding site" evidence="1">
    <location>
        <position position="140"/>
    </location>
    <ligand>
        <name>substrate</name>
    </ligand>
</feature>
<reference key="1">
    <citation type="journal article" date="2007" name="PLoS Biol.">
        <title>Evolution of symbiotic bacteria in the distal human intestine.</title>
        <authorList>
            <person name="Xu J."/>
            <person name="Mahowald M.A."/>
            <person name="Ley R.E."/>
            <person name="Lozupone C.A."/>
            <person name="Hamady M."/>
            <person name="Martens E.C."/>
            <person name="Henrissat B."/>
            <person name="Coutinho P.M."/>
            <person name="Minx P."/>
            <person name="Latreille P."/>
            <person name="Cordum H."/>
            <person name="Van Brunt A."/>
            <person name="Kim K."/>
            <person name="Fulton R.S."/>
            <person name="Fulton L.A."/>
            <person name="Clifton S.W."/>
            <person name="Wilson R.K."/>
            <person name="Knight R.D."/>
            <person name="Gordon J.I."/>
        </authorList>
    </citation>
    <scope>NUCLEOTIDE SEQUENCE [LARGE SCALE GENOMIC DNA]</scope>
    <source>
        <strain>ATCC 8482 / DSM 1447 / JCM 5826 / CCUG 4940 / NBRC 14291 / NCTC 11154</strain>
    </source>
</reference>
<dbReference type="EC" id="2.7.1.71" evidence="1"/>
<dbReference type="EMBL" id="CP000139">
    <property type="protein sequence ID" value="ABR39025.1"/>
    <property type="molecule type" value="Genomic_DNA"/>
</dbReference>
<dbReference type="RefSeq" id="WP_005838813.1">
    <property type="nucleotide sequence ID" value="NZ_JANSWM010000103.1"/>
</dbReference>
<dbReference type="SMR" id="A6L011"/>
<dbReference type="STRING" id="435590.BVU_1336"/>
<dbReference type="PaxDb" id="435590-BVU_1336"/>
<dbReference type="GeneID" id="5302302"/>
<dbReference type="KEGG" id="bvu:BVU_1336"/>
<dbReference type="eggNOG" id="COG0703">
    <property type="taxonomic scope" value="Bacteria"/>
</dbReference>
<dbReference type="HOGENOM" id="CLU_057607_4_0_10"/>
<dbReference type="BioCyc" id="BVUL435590:G1G59-1394-MONOMER"/>
<dbReference type="UniPathway" id="UPA00053">
    <property type="reaction ID" value="UER00088"/>
</dbReference>
<dbReference type="Proteomes" id="UP000002861">
    <property type="component" value="Chromosome"/>
</dbReference>
<dbReference type="GO" id="GO:0005829">
    <property type="term" value="C:cytosol"/>
    <property type="evidence" value="ECO:0007669"/>
    <property type="project" value="TreeGrafter"/>
</dbReference>
<dbReference type="GO" id="GO:0005524">
    <property type="term" value="F:ATP binding"/>
    <property type="evidence" value="ECO:0007669"/>
    <property type="project" value="UniProtKB-UniRule"/>
</dbReference>
<dbReference type="GO" id="GO:0000287">
    <property type="term" value="F:magnesium ion binding"/>
    <property type="evidence" value="ECO:0007669"/>
    <property type="project" value="UniProtKB-UniRule"/>
</dbReference>
<dbReference type="GO" id="GO:0004765">
    <property type="term" value="F:shikimate kinase activity"/>
    <property type="evidence" value="ECO:0007669"/>
    <property type="project" value="UniProtKB-UniRule"/>
</dbReference>
<dbReference type="GO" id="GO:0008652">
    <property type="term" value="P:amino acid biosynthetic process"/>
    <property type="evidence" value="ECO:0007669"/>
    <property type="project" value="UniProtKB-KW"/>
</dbReference>
<dbReference type="GO" id="GO:0009073">
    <property type="term" value="P:aromatic amino acid family biosynthetic process"/>
    <property type="evidence" value="ECO:0007669"/>
    <property type="project" value="UniProtKB-KW"/>
</dbReference>
<dbReference type="GO" id="GO:0009423">
    <property type="term" value="P:chorismate biosynthetic process"/>
    <property type="evidence" value="ECO:0007669"/>
    <property type="project" value="UniProtKB-UniRule"/>
</dbReference>
<dbReference type="CDD" id="cd00464">
    <property type="entry name" value="SK"/>
    <property type="match status" value="1"/>
</dbReference>
<dbReference type="Gene3D" id="3.40.50.300">
    <property type="entry name" value="P-loop containing nucleotide triphosphate hydrolases"/>
    <property type="match status" value="1"/>
</dbReference>
<dbReference type="HAMAP" id="MF_00109">
    <property type="entry name" value="Shikimate_kinase"/>
    <property type="match status" value="1"/>
</dbReference>
<dbReference type="InterPro" id="IPR027417">
    <property type="entry name" value="P-loop_NTPase"/>
</dbReference>
<dbReference type="InterPro" id="IPR031322">
    <property type="entry name" value="Shikimate/glucono_kinase"/>
</dbReference>
<dbReference type="InterPro" id="IPR000623">
    <property type="entry name" value="Shikimate_kinase/TSH1"/>
</dbReference>
<dbReference type="NCBIfam" id="NF010555">
    <property type="entry name" value="PRK13949.1"/>
    <property type="match status" value="1"/>
</dbReference>
<dbReference type="PANTHER" id="PTHR21087">
    <property type="entry name" value="SHIKIMATE KINASE"/>
    <property type="match status" value="1"/>
</dbReference>
<dbReference type="PANTHER" id="PTHR21087:SF16">
    <property type="entry name" value="SHIKIMATE KINASE 1, CHLOROPLASTIC"/>
    <property type="match status" value="1"/>
</dbReference>
<dbReference type="Pfam" id="PF01202">
    <property type="entry name" value="SKI"/>
    <property type="match status" value="1"/>
</dbReference>
<dbReference type="PRINTS" id="PR01100">
    <property type="entry name" value="SHIKIMTKNASE"/>
</dbReference>
<dbReference type="SUPFAM" id="SSF52540">
    <property type="entry name" value="P-loop containing nucleoside triphosphate hydrolases"/>
    <property type="match status" value="1"/>
</dbReference>
<keyword id="KW-0028">Amino-acid biosynthesis</keyword>
<keyword id="KW-0057">Aromatic amino acid biosynthesis</keyword>
<keyword id="KW-0067">ATP-binding</keyword>
<keyword id="KW-0963">Cytoplasm</keyword>
<keyword id="KW-0418">Kinase</keyword>
<keyword id="KW-0460">Magnesium</keyword>
<keyword id="KW-0479">Metal-binding</keyword>
<keyword id="KW-0547">Nucleotide-binding</keyword>
<keyword id="KW-0808">Transferase</keyword>
<proteinExistence type="inferred from homology"/>
<evidence type="ECO:0000255" key="1">
    <source>
        <dbReference type="HAMAP-Rule" id="MF_00109"/>
    </source>
</evidence>
<name>AROK_PHOV8</name>
<sequence>MTRIFLIGYMGAGKTTLGKAFAREMSLNFIDLDWFIEERFHKTVQQLFLERGEDGFRELERKMLHEVAEFEDVVVSTGGGTPCFFDNMEYMNDCGDTVFLDVEPAVLFRRLRVAKQQRPLLANKSDEELMDFICEALQKRHPFYSKAKHLFKADELEDKRQIQASVDSLRKKLNK</sequence>
<accession>A6L011</accession>